<evidence type="ECO:0000255" key="1">
    <source>
        <dbReference type="HAMAP-Rule" id="MF_01359"/>
    </source>
</evidence>
<accession>B4EZC8</accession>
<proteinExistence type="inferred from homology"/>
<keyword id="KW-0997">Cell inner membrane</keyword>
<keyword id="KW-1003">Cell membrane</keyword>
<keyword id="KW-0472">Membrane</keyword>
<keyword id="KW-0511">Multifunctional enzyme</keyword>
<keyword id="KW-0520">NAD</keyword>
<keyword id="KW-0874">Quinone</keyword>
<keyword id="KW-1185">Reference proteome</keyword>
<keyword id="KW-1278">Translocase</keyword>
<keyword id="KW-0813">Transport</keyword>
<keyword id="KW-0830">Ubiquinone</keyword>
<reference key="1">
    <citation type="journal article" date="2008" name="J. Bacteriol.">
        <title>Complete genome sequence of uropathogenic Proteus mirabilis, a master of both adherence and motility.</title>
        <authorList>
            <person name="Pearson M.M."/>
            <person name="Sebaihia M."/>
            <person name="Churcher C."/>
            <person name="Quail M.A."/>
            <person name="Seshasayee A.S."/>
            <person name="Luscombe N.M."/>
            <person name="Abdellah Z."/>
            <person name="Arrosmith C."/>
            <person name="Atkin B."/>
            <person name="Chillingworth T."/>
            <person name="Hauser H."/>
            <person name="Jagels K."/>
            <person name="Moule S."/>
            <person name="Mungall K."/>
            <person name="Norbertczak H."/>
            <person name="Rabbinowitsch E."/>
            <person name="Walker D."/>
            <person name="Whithead S."/>
            <person name="Thomson N.R."/>
            <person name="Rather P.N."/>
            <person name="Parkhill J."/>
            <person name="Mobley H.L.T."/>
        </authorList>
    </citation>
    <scope>NUCLEOTIDE SEQUENCE [LARGE SCALE GENOMIC DNA]</scope>
    <source>
        <strain>HI4320</strain>
    </source>
</reference>
<name>NUOCD_PROMH</name>
<comment type="function">
    <text evidence="1">NDH-1 shuttles electrons from NADH, via FMN and iron-sulfur (Fe-S) centers, to quinones in the respiratory chain. The immediate electron acceptor for the enzyme in this species is believed to be ubiquinone. Couples the redox reaction to proton translocation (for every two electrons transferred, four hydrogen ions are translocated across the cytoplasmic membrane), and thus conserves the redox energy in a proton gradient.</text>
</comment>
<comment type="catalytic activity">
    <reaction evidence="1">
        <text>a quinone + NADH + 5 H(+)(in) = a quinol + NAD(+) + 4 H(+)(out)</text>
        <dbReference type="Rhea" id="RHEA:57888"/>
        <dbReference type="ChEBI" id="CHEBI:15378"/>
        <dbReference type="ChEBI" id="CHEBI:24646"/>
        <dbReference type="ChEBI" id="CHEBI:57540"/>
        <dbReference type="ChEBI" id="CHEBI:57945"/>
        <dbReference type="ChEBI" id="CHEBI:132124"/>
    </reaction>
</comment>
<comment type="subunit">
    <text evidence="1">NDH-1 is composed of 13 different subunits. Subunits NuoB, CD, E, F, and G constitute the peripheral sector of the complex.</text>
</comment>
<comment type="subcellular location">
    <subcellularLocation>
        <location evidence="1">Cell inner membrane</location>
        <topology evidence="1">Peripheral membrane protein</topology>
        <orientation evidence="1">Cytoplasmic side</orientation>
    </subcellularLocation>
</comment>
<comment type="similarity">
    <text evidence="1">In the N-terminal section; belongs to the complex I 30 kDa subunit family.</text>
</comment>
<comment type="similarity">
    <text evidence="1">In the C-terminal section; belongs to the complex I 49 kDa subunit family.</text>
</comment>
<sequence length="598" mass="68991">MTDQIAQNSARPAWETSDHIDDQVVNELRQKFGPDAFTFQPTRTGMPVVWVKREQLIEVMQYLKSLPKPYVMLYDLHGVDERVRTHRQGLPAADFSVFYHLISLDRNKDIMLKVALSEKDLNLPTLTSIFPNSNWYEREVWDMFGIVFNGHPNLRRIMMLPNWEGHPLRKDYPARATEFDPYVLTKQKEDLEMESLTFKPEEWGMKRGTENEDFMFLNLGPNHPSSHGAFRIILQLDGEEIVNCVPDVGYHHRGAEKMGERQSWHSYIPYTDRIEYLGGCVNEMPYVLAVEKLAGIEVPERVKVIRVMLSELFRINSHLLYISTFIQDVGAMTPVFFAFTDRQKVYDIVEAITGFRMHPAWFRIGGVAHDLPKGWERLLREFLDWMPKRLDSYVKAALQNSILKGRTIGVASYNAKEALDWGVTGAGLRATGVEFDVRKWRPYSGYENFEFEIPVASNGDCYDRVMLKVEELRQSLRILEQCYKNMPAGPFKADHPLTTPPPKERTLQHIETMINHFLQVSWGPVMPANESFQMVEATKGINSYYLTSDGSTMSYRTRIRTPSFAHLQQIPAVIRGSLVSDLIVYLGSIDFVMSDVDR</sequence>
<feature type="chain" id="PRO_0000358654" description="NADH-quinone oxidoreductase subunit C/D">
    <location>
        <begin position="1"/>
        <end position="598"/>
    </location>
</feature>
<feature type="region of interest" description="NADH dehydrogenase I subunit C" evidence="1">
    <location>
        <begin position="1"/>
        <end position="189"/>
    </location>
</feature>
<feature type="region of interest" description="NADH dehydrogenase I subunit D" evidence="1">
    <location>
        <begin position="213"/>
        <end position="598"/>
    </location>
</feature>
<gene>
    <name evidence="1" type="primary">nuoC</name>
    <name evidence="1" type="synonym">nuoCD</name>
    <name evidence="1" type="synonym">nuoD</name>
    <name type="ordered locus">PMI1760</name>
</gene>
<protein>
    <recommendedName>
        <fullName evidence="1">NADH-quinone oxidoreductase subunit C/D</fullName>
        <ecNumber evidence="1">7.1.1.-</ecNumber>
    </recommendedName>
    <alternativeName>
        <fullName evidence="1">NADH dehydrogenase I subunit C/D</fullName>
    </alternativeName>
    <alternativeName>
        <fullName evidence="1">NDH-1 subunit C/D</fullName>
    </alternativeName>
</protein>
<organism>
    <name type="scientific">Proteus mirabilis (strain HI4320)</name>
    <dbReference type="NCBI Taxonomy" id="529507"/>
    <lineage>
        <taxon>Bacteria</taxon>
        <taxon>Pseudomonadati</taxon>
        <taxon>Pseudomonadota</taxon>
        <taxon>Gammaproteobacteria</taxon>
        <taxon>Enterobacterales</taxon>
        <taxon>Morganellaceae</taxon>
        <taxon>Proteus</taxon>
    </lineage>
</organism>
<dbReference type="EC" id="7.1.1.-" evidence="1"/>
<dbReference type="EMBL" id="AM942759">
    <property type="protein sequence ID" value="CAR43664.1"/>
    <property type="molecule type" value="Genomic_DNA"/>
</dbReference>
<dbReference type="RefSeq" id="WP_004243696.1">
    <property type="nucleotide sequence ID" value="NC_010554.1"/>
</dbReference>
<dbReference type="SMR" id="B4EZC8"/>
<dbReference type="EnsemblBacteria" id="CAR43664">
    <property type="protein sequence ID" value="CAR43664"/>
    <property type="gene ID" value="PMI1760"/>
</dbReference>
<dbReference type="GeneID" id="6802799"/>
<dbReference type="KEGG" id="pmr:PMI1760"/>
<dbReference type="eggNOG" id="COG0649">
    <property type="taxonomic scope" value="Bacteria"/>
</dbReference>
<dbReference type="eggNOG" id="COG0852">
    <property type="taxonomic scope" value="Bacteria"/>
</dbReference>
<dbReference type="HOGENOM" id="CLU_015134_3_2_6"/>
<dbReference type="Proteomes" id="UP000008319">
    <property type="component" value="Chromosome"/>
</dbReference>
<dbReference type="GO" id="GO:0030964">
    <property type="term" value="C:NADH dehydrogenase complex"/>
    <property type="evidence" value="ECO:0007669"/>
    <property type="project" value="InterPro"/>
</dbReference>
<dbReference type="GO" id="GO:0005886">
    <property type="term" value="C:plasma membrane"/>
    <property type="evidence" value="ECO:0007669"/>
    <property type="project" value="UniProtKB-SubCell"/>
</dbReference>
<dbReference type="GO" id="GO:0051287">
    <property type="term" value="F:NAD binding"/>
    <property type="evidence" value="ECO:0007669"/>
    <property type="project" value="InterPro"/>
</dbReference>
<dbReference type="GO" id="GO:0008137">
    <property type="term" value="F:NADH dehydrogenase (ubiquinone) activity"/>
    <property type="evidence" value="ECO:0007669"/>
    <property type="project" value="InterPro"/>
</dbReference>
<dbReference type="GO" id="GO:0050136">
    <property type="term" value="F:NADH:ubiquinone reductase (non-electrogenic) activity"/>
    <property type="evidence" value="ECO:0007669"/>
    <property type="project" value="UniProtKB-UniRule"/>
</dbReference>
<dbReference type="GO" id="GO:0048038">
    <property type="term" value="F:quinone binding"/>
    <property type="evidence" value="ECO:0007669"/>
    <property type="project" value="UniProtKB-KW"/>
</dbReference>
<dbReference type="FunFam" id="1.10.645.10:FF:000001">
    <property type="entry name" value="NADH-quinone oxidoreductase subunit C/D"/>
    <property type="match status" value="1"/>
</dbReference>
<dbReference type="FunFam" id="3.30.460.80:FF:000001">
    <property type="entry name" value="NADH-quinone oxidoreductase subunit C/D"/>
    <property type="match status" value="1"/>
</dbReference>
<dbReference type="Gene3D" id="1.10.645.10">
    <property type="entry name" value="Cytochrome-c3 Hydrogenase, chain B"/>
    <property type="match status" value="1"/>
</dbReference>
<dbReference type="Gene3D" id="3.30.460.80">
    <property type="entry name" value="NADH:ubiquinone oxidoreductase, 30kDa subunit"/>
    <property type="match status" value="1"/>
</dbReference>
<dbReference type="HAMAP" id="MF_01357">
    <property type="entry name" value="NDH1_NuoC"/>
    <property type="match status" value="1"/>
</dbReference>
<dbReference type="HAMAP" id="MF_01359">
    <property type="entry name" value="NDH1_NuoCD_1"/>
    <property type="match status" value="1"/>
</dbReference>
<dbReference type="HAMAP" id="MF_01358">
    <property type="entry name" value="NDH1_NuoD"/>
    <property type="match status" value="1"/>
</dbReference>
<dbReference type="InterPro" id="IPR010218">
    <property type="entry name" value="NADH_DH_suC"/>
</dbReference>
<dbReference type="InterPro" id="IPR023062">
    <property type="entry name" value="NADH_DH_suCD"/>
</dbReference>
<dbReference type="InterPro" id="IPR001135">
    <property type="entry name" value="NADH_Q_OxRdtase_suD"/>
</dbReference>
<dbReference type="InterPro" id="IPR037232">
    <property type="entry name" value="NADH_quin_OxRdtase_su_C/D-like"/>
</dbReference>
<dbReference type="InterPro" id="IPR001268">
    <property type="entry name" value="NADH_UbQ_OxRdtase_30kDa_su"/>
</dbReference>
<dbReference type="InterPro" id="IPR014029">
    <property type="entry name" value="NADH_UbQ_OxRdtase_49kDa_CS"/>
</dbReference>
<dbReference type="InterPro" id="IPR020396">
    <property type="entry name" value="NADH_UbQ_OxRdtase_CS"/>
</dbReference>
<dbReference type="InterPro" id="IPR022885">
    <property type="entry name" value="NDH1_su_D/H"/>
</dbReference>
<dbReference type="InterPro" id="IPR029014">
    <property type="entry name" value="NiFe-Hase_large"/>
</dbReference>
<dbReference type="NCBIfam" id="TIGR01961">
    <property type="entry name" value="NuoC_fam"/>
    <property type="match status" value="1"/>
</dbReference>
<dbReference type="NCBIfam" id="TIGR01962">
    <property type="entry name" value="NuoD"/>
    <property type="match status" value="1"/>
</dbReference>
<dbReference type="NCBIfam" id="NF004739">
    <property type="entry name" value="PRK06075.1"/>
    <property type="match status" value="1"/>
</dbReference>
<dbReference type="NCBIfam" id="NF008728">
    <property type="entry name" value="PRK11742.1"/>
    <property type="match status" value="1"/>
</dbReference>
<dbReference type="PANTHER" id="PTHR11993:SF45">
    <property type="entry name" value="NADH-QUINONE OXIDOREDUCTASE SUBUNIT C_D"/>
    <property type="match status" value="1"/>
</dbReference>
<dbReference type="PANTHER" id="PTHR11993">
    <property type="entry name" value="NADH-UBIQUINONE OXIDOREDUCTASE 49 KDA SUBUNIT"/>
    <property type="match status" value="1"/>
</dbReference>
<dbReference type="Pfam" id="PF00329">
    <property type="entry name" value="Complex1_30kDa"/>
    <property type="match status" value="1"/>
</dbReference>
<dbReference type="Pfam" id="PF00346">
    <property type="entry name" value="Complex1_49kDa"/>
    <property type="match status" value="1"/>
</dbReference>
<dbReference type="SUPFAM" id="SSF56762">
    <property type="entry name" value="HydB/Nqo4-like"/>
    <property type="match status" value="1"/>
</dbReference>
<dbReference type="SUPFAM" id="SSF143243">
    <property type="entry name" value="Nqo5-like"/>
    <property type="match status" value="1"/>
</dbReference>
<dbReference type="PROSITE" id="PS00542">
    <property type="entry name" value="COMPLEX1_30K"/>
    <property type="match status" value="1"/>
</dbReference>
<dbReference type="PROSITE" id="PS00535">
    <property type="entry name" value="COMPLEX1_49K"/>
    <property type="match status" value="1"/>
</dbReference>